<feature type="chain" id="PRO_0000452255" description="Meiotic drive suppressor wtf5">
    <location>
        <begin position="1"/>
        <end position="269"/>
    </location>
</feature>
<feature type="transmembrane region" description="Helical" evidence="4">
    <location>
        <begin position="73"/>
        <end position="93"/>
    </location>
</feature>
<feature type="transmembrane region" description="Helical" evidence="4">
    <location>
        <begin position="110"/>
        <end position="130"/>
    </location>
</feature>
<feature type="transmembrane region" description="Helical" evidence="4">
    <location>
        <begin position="140"/>
        <end position="160"/>
    </location>
</feature>
<feature type="transmembrane region" description="Helical" evidence="4">
    <location>
        <begin position="174"/>
        <end position="194"/>
    </location>
</feature>
<feature type="transmembrane region" description="Helical" evidence="4">
    <location>
        <begin position="216"/>
        <end position="236"/>
    </location>
</feature>
<feature type="region of interest" description="Disordered" evidence="5">
    <location>
        <begin position="1"/>
        <end position="67"/>
    </location>
</feature>
<feature type="compositionally biased region" description="Basic and acidic residues" evidence="5">
    <location>
        <begin position="19"/>
        <end position="30"/>
    </location>
</feature>
<accession>A0A218N033</accession>
<gene>
    <name evidence="9" type="primary">wtf5</name>
</gene>
<proteinExistence type="inferred from homology"/>
<sequence>MKNNHTSLKSPLDEEDELKTDHEIDLEKGPLPEYDSEEESTLPPYSDHALVNNPPNTHRENHSYRTTDNSSPLLIKLLISFTSIILFNAPAVCYLKYKDAFFKNYGAAEWTLFGFWCLVCTLALIFLTYFYETWTKAVKVTVISLAKCVKVTAIFLAQCVKACGKGIKHFLKKWENMPMAFSEVFLFNILVGSPRMNLRYIFGDRWGLKCSLADHIIFVVLSILVFIAETVKPGSIRVNLIRKMGYEAKQQVNEYTAVPLREMNPESEA</sequence>
<evidence type="ECO:0000250" key="1">
    <source>
        <dbReference type="UniProtKB" id="A0A218N034"/>
    </source>
</evidence>
<evidence type="ECO:0000250" key="2">
    <source>
        <dbReference type="UniProtKB" id="A0A482ATU4"/>
    </source>
</evidence>
<evidence type="ECO:0000250" key="3">
    <source>
        <dbReference type="UniProtKB" id="O74420"/>
    </source>
</evidence>
<evidence type="ECO:0000255" key="4"/>
<evidence type="ECO:0000256" key="5">
    <source>
        <dbReference type="SAM" id="MobiDB-lite"/>
    </source>
</evidence>
<evidence type="ECO:0000269" key="6">
    <source>
    </source>
</evidence>
<evidence type="ECO:0000303" key="7">
    <source>
    </source>
</evidence>
<evidence type="ECO:0000305" key="8"/>
<evidence type="ECO:0000312" key="9">
    <source>
        <dbReference type="EMBL" id="ASF62182.1"/>
    </source>
</evidence>
<keyword id="KW-0472">Membrane</keyword>
<keyword id="KW-0812">Transmembrane</keyword>
<keyword id="KW-1133">Transmembrane helix</keyword>
<keyword id="KW-0926">Vacuole</keyword>
<protein>
    <recommendedName>
        <fullName evidence="7">Meiotic drive suppressor wtf5</fullName>
    </recommendedName>
</protein>
<organism evidence="9">
    <name type="scientific">Schizosaccharomyces kambucha</name>
    <name type="common">Fission yeast</name>
    <dbReference type="NCBI Taxonomy" id="204045"/>
    <lineage>
        <taxon>Eukaryota</taxon>
        <taxon>Fungi</taxon>
        <taxon>Dikarya</taxon>
        <taxon>Ascomycota</taxon>
        <taxon>Taphrinomycotina</taxon>
        <taxon>Schizosaccharomycetes</taxon>
        <taxon>Schizosaccharomycetales</taxon>
        <taxon>Schizosaccharomycetaceae</taxon>
        <taxon>Schizosaccharomyces</taxon>
    </lineage>
</organism>
<dbReference type="EMBL" id="KY652741">
    <property type="protein sequence ID" value="ASF62182.1"/>
    <property type="molecule type" value="Genomic_DNA"/>
</dbReference>
<dbReference type="GO" id="GO:0005774">
    <property type="term" value="C:vacuolar membrane"/>
    <property type="evidence" value="ECO:0007669"/>
    <property type="project" value="UniProtKB-SubCell"/>
</dbReference>
<dbReference type="GO" id="GO:0110134">
    <property type="term" value="P:meiotic drive"/>
    <property type="evidence" value="ECO:0007669"/>
    <property type="project" value="InterPro"/>
</dbReference>
<dbReference type="InterPro" id="IPR004982">
    <property type="entry name" value="WTF"/>
</dbReference>
<dbReference type="Pfam" id="PF03303">
    <property type="entry name" value="WTF"/>
    <property type="match status" value="2"/>
</dbReference>
<name>WTF5_SCHKA</name>
<reference evidence="9" key="1">
    <citation type="journal article" date="2017" name="Elife">
        <title>wtf genes are prolific dual poison-antidote meiotic drivers.</title>
        <authorList>
            <person name="Nuckolls N.L."/>
            <person name="Bravo Nunez M.A."/>
            <person name="Eickbush M.T."/>
            <person name="Young J.M."/>
            <person name="Lange J.J."/>
            <person name="Yu J.S."/>
            <person name="Smith G.R."/>
            <person name="Jaspersen S.L."/>
            <person name="Malik H.S."/>
            <person name="Zanders S.E."/>
        </authorList>
    </citation>
    <scope>NUCLEOTIDE SEQUENCE [GENOMIC DNA]</scope>
    <scope>FUNCTION</scope>
</reference>
<comment type="function">
    <text evidence="1 2 6">Acts as a suppressor component of the dual wtf meiotic drive system, and can suppress but not confer meiotic drive by compatible poisons (PubMed:28631612). Wtf meiotic drive systems promote unequal transmission of alleles from the parental zygote to progeny spores by encoding a poison and an antidote from the same locus; the poison is trans-acting and forms toxic aggregates in all spores within an ascus, wherease the antidote is spore-specific and targets aggregates for degradation by the vacuole (By similarity). Meiotic drive by wtf systems therefore lead to poisoning of all progeny that do not inherit the dual poison/antidote allele, or express a compatible antidote (By similarity).</text>
</comment>
<comment type="subunit">
    <text evidence="1 3">Homomer (By similarity). Interacts with other proteins that exhibit high sequence similarity (By similarity).</text>
</comment>
<comment type="subcellular location">
    <subcellularLocation>
        <location evidence="1 4">Spore membrane</location>
        <topology evidence="4">Multi-pass membrane protein</topology>
    </subcellularLocation>
    <subcellularLocation>
        <location evidence="1 4">Vacuole membrane</location>
        <topology evidence="4">Multi-pass membrane protein</topology>
    </subcellularLocation>
</comment>
<comment type="similarity">
    <text evidence="8">Belongs to the WTF family.</text>
</comment>